<gene>
    <name evidence="1" type="primary">tagH</name>
    <name type="ordered locus">EF_2486</name>
</gene>
<feature type="chain" id="PRO_0000092989" description="Teichoic acids export ATP-binding protein TagH">
    <location>
        <begin position="1"/>
        <end position="447"/>
    </location>
</feature>
<feature type="domain" description="ABC transporter" evidence="1">
    <location>
        <begin position="24"/>
        <end position="246"/>
    </location>
</feature>
<feature type="domain" description="LysM" evidence="2">
    <location>
        <begin position="398"/>
        <end position="442"/>
    </location>
</feature>
<feature type="region of interest" description="Unknown">
    <location>
        <begin position="247"/>
        <end position="447"/>
    </location>
</feature>
<feature type="region of interest" description="Disordered" evidence="3">
    <location>
        <begin position="359"/>
        <end position="393"/>
    </location>
</feature>
<feature type="compositionally biased region" description="Polar residues" evidence="3">
    <location>
        <begin position="360"/>
        <end position="369"/>
    </location>
</feature>
<feature type="compositionally biased region" description="Polar residues" evidence="3">
    <location>
        <begin position="379"/>
        <end position="393"/>
    </location>
</feature>
<feature type="binding site" evidence="1">
    <location>
        <begin position="60"/>
        <end position="67"/>
    </location>
    <ligand>
        <name>ATP</name>
        <dbReference type="ChEBI" id="CHEBI:30616"/>
    </ligand>
</feature>
<accession>Q831L8</accession>
<protein>
    <recommendedName>
        <fullName evidence="1">Teichoic acids export ATP-binding protein TagH</fullName>
        <ecNumber evidence="1">7.5.2.4</ecNumber>
    </recommendedName>
</protein>
<organism>
    <name type="scientific">Enterococcus faecalis (strain ATCC 700802 / V583)</name>
    <dbReference type="NCBI Taxonomy" id="226185"/>
    <lineage>
        <taxon>Bacteria</taxon>
        <taxon>Bacillati</taxon>
        <taxon>Bacillota</taxon>
        <taxon>Bacilli</taxon>
        <taxon>Lactobacillales</taxon>
        <taxon>Enterococcaceae</taxon>
        <taxon>Enterococcus</taxon>
    </lineage>
</organism>
<evidence type="ECO:0000255" key="1">
    <source>
        <dbReference type="HAMAP-Rule" id="MF_01715"/>
    </source>
</evidence>
<evidence type="ECO:0000255" key="2">
    <source>
        <dbReference type="PROSITE-ProRule" id="PRU01118"/>
    </source>
</evidence>
<evidence type="ECO:0000256" key="3">
    <source>
        <dbReference type="SAM" id="MobiDB-lite"/>
    </source>
</evidence>
<sequence length="447" mass="50100">MEKELKVRTKLLTKEYSLAQTRIDKLKTLFSVFQNKVPTFWALKGVSLDVYSGETIGIIGLNGSGKSTLSNIISGITPQTSGELEINGEVSIISIGAGLNNNLTGRENIRMKCLMLGEKNKEIDAKIDDIIEFSELGVFIDQPVKTYSSGMRAKLGFSIAVHQNPDILVIDEALSVGDQTFYNKGLKKMLAFKEQGKTIFFVSHSIQQVEQICDRVAWMHYGDLRAFGETKHILKEYRAFLHRYNHFTEPQKESYQRDGKAKQRNFSLEQLQETILEKANQQVGSRRTTKEVIKFTTKNKIGDKMTLGTKSLLILLLCMIFYVSLTFVKGISLTTAFIHPAETIQRIFVPEKVAGKDTNAVKTTKTKPASTKESRQQEEVQPSPTNVPENNNSEQAVSTYTVEVGDSVSLIAENHGLTIEQLQTLNPEIIEVPIYPGQVLKLKEVTE</sequence>
<keyword id="KW-0067">ATP-binding</keyword>
<keyword id="KW-1003">Cell membrane</keyword>
<keyword id="KW-0472">Membrane</keyword>
<keyword id="KW-0547">Nucleotide-binding</keyword>
<keyword id="KW-1185">Reference proteome</keyword>
<keyword id="KW-1278">Translocase</keyword>
<keyword id="KW-0813">Transport</keyword>
<dbReference type="EC" id="7.5.2.4" evidence="1"/>
<dbReference type="EMBL" id="AE016830">
    <property type="protein sequence ID" value="AAO82202.1"/>
    <property type="molecule type" value="Genomic_DNA"/>
</dbReference>
<dbReference type="RefSeq" id="NP_816132.1">
    <property type="nucleotide sequence ID" value="NC_004668.1"/>
</dbReference>
<dbReference type="SMR" id="Q831L8"/>
<dbReference type="STRING" id="226185.EF_2486"/>
<dbReference type="EnsemblBacteria" id="AAO82202">
    <property type="protein sequence ID" value="AAO82202"/>
    <property type="gene ID" value="EF_2486"/>
</dbReference>
<dbReference type="KEGG" id="efa:EF2486"/>
<dbReference type="PATRIC" id="fig|226185.45.peg.1062"/>
<dbReference type="eggNOG" id="COG1134">
    <property type="taxonomic scope" value="Bacteria"/>
</dbReference>
<dbReference type="eggNOG" id="COG1388">
    <property type="taxonomic scope" value="Bacteria"/>
</dbReference>
<dbReference type="HOGENOM" id="CLU_000604_101_8_9"/>
<dbReference type="Proteomes" id="UP000001415">
    <property type="component" value="Chromosome"/>
</dbReference>
<dbReference type="GO" id="GO:0005886">
    <property type="term" value="C:plasma membrane"/>
    <property type="evidence" value="ECO:0007669"/>
    <property type="project" value="UniProtKB-SubCell"/>
</dbReference>
<dbReference type="GO" id="GO:0015438">
    <property type="term" value="F:ABC-type teichoic acid transporter activity"/>
    <property type="evidence" value="ECO:0007669"/>
    <property type="project" value="UniProtKB-EC"/>
</dbReference>
<dbReference type="GO" id="GO:0005524">
    <property type="term" value="F:ATP binding"/>
    <property type="evidence" value="ECO:0007669"/>
    <property type="project" value="UniProtKB-KW"/>
</dbReference>
<dbReference type="GO" id="GO:0016887">
    <property type="term" value="F:ATP hydrolysis activity"/>
    <property type="evidence" value="ECO:0007669"/>
    <property type="project" value="InterPro"/>
</dbReference>
<dbReference type="CDD" id="cd03220">
    <property type="entry name" value="ABC_KpsT_Wzt"/>
    <property type="match status" value="1"/>
</dbReference>
<dbReference type="CDD" id="cd00118">
    <property type="entry name" value="LysM"/>
    <property type="match status" value="1"/>
</dbReference>
<dbReference type="FunFam" id="3.40.50.300:FF:003010">
    <property type="entry name" value="Teichoic acids export ATP-binding protein TagH"/>
    <property type="match status" value="1"/>
</dbReference>
<dbReference type="Gene3D" id="3.10.350.10">
    <property type="entry name" value="LysM domain"/>
    <property type="match status" value="1"/>
</dbReference>
<dbReference type="Gene3D" id="3.40.50.300">
    <property type="entry name" value="P-loop containing nucleotide triphosphate hydrolases"/>
    <property type="match status" value="1"/>
</dbReference>
<dbReference type="InterPro" id="IPR003593">
    <property type="entry name" value="AAA+_ATPase"/>
</dbReference>
<dbReference type="InterPro" id="IPR003439">
    <property type="entry name" value="ABC_transporter-like_ATP-bd"/>
</dbReference>
<dbReference type="InterPro" id="IPR017871">
    <property type="entry name" value="ABC_transporter-like_CS"/>
</dbReference>
<dbReference type="InterPro" id="IPR015860">
    <property type="entry name" value="ABC_transpr_TagH-like"/>
</dbReference>
<dbReference type="InterPro" id="IPR050683">
    <property type="entry name" value="Bact_Polysacc_Export_ATP-bd"/>
</dbReference>
<dbReference type="InterPro" id="IPR018392">
    <property type="entry name" value="LysM_dom"/>
</dbReference>
<dbReference type="InterPro" id="IPR036779">
    <property type="entry name" value="LysM_dom_sf"/>
</dbReference>
<dbReference type="InterPro" id="IPR027417">
    <property type="entry name" value="P-loop_NTPase"/>
</dbReference>
<dbReference type="PANTHER" id="PTHR46743">
    <property type="entry name" value="TEICHOIC ACIDS EXPORT ATP-BINDING PROTEIN TAGH"/>
    <property type="match status" value="1"/>
</dbReference>
<dbReference type="PANTHER" id="PTHR46743:SF2">
    <property type="entry name" value="TEICHOIC ACIDS EXPORT ATP-BINDING PROTEIN TAGH"/>
    <property type="match status" value="1"/>
</dbReference>
<dbReference type="Pfam" id="PF00005">
    <property type="entry name" value="ABC_tran"/>
    <property type="match status" value="1"/>
</dbReference>
<dbReference type="Pfam" id="PF01476">
    <property type="entry name" value="LysM"/>
    <property type="match status" value="1"/>
</dbReference>
<dbReference type="SMART" id="SM00382">
    <property type="entry name" value="AAA"/>
    <property type="match status" value="1"/>
</dbReference>
<dbReference type="SMART" id="SM00257">
    <property type="entry name" value="LysM"/>
    <property type="match status" value="1"/>
</dbReference>
<dbReference type="SUPFAM" id="SSF54106">
    <property type="entry name" value="LysM domain"/>
    <property type="match status" value="1"/>
</dbReference>
<dbReference type="SUPFAM" id="SSF52540">
    <property type="entry name" value="P-loop containing nucleoside triphosphate hydrolases"/>
    <property type="match status" value="1"/>
</dbReference>
<dbReference type="PROSITE" id="PS00211">
    <property type="entry name" value="ABC_TRANSPORTER_1"/>
    <property type="match status" value="1"/>
</dbReference>
<dbReference type="PROSITE" id="PS50893">
    <property type="entry name" value="ABC_TRANSPORTER_2"/>
    <property type="match status" value="1"/>
</dbReference>
<dbReference type="PROSITE" id="PS51782">
    <property type="entry name" value="LYSM"/>
    <property type="match status" value="1"/>
</dbReference>
<dbReference type="PROSITE" id="PS51251">
    <property type="entry name" value="TAGH"/>
    <property type="match status" value="1"/>
</dbReference>
<proteinExistence type="inferred from homology"/>
<comment type="function">
    <text evidence="1">Part of the ABC transporter complex TagGH involved in teichoic acids export. Responsible for energy coupling to the transport system.</text>
</comment>
<comment type="catalytic activity">
    <reaction evidence="1">
        <text>ATP + H2O + teichoic acidSide 1 = ADP + phosphate + teichoic acidSide 2.</text>
        <dbReference type="EC" id="7.5.2.4"/>
    </reaction>
</comment>
<comment type="subunit">
    <text evidence="1">The complex is composed of two ATP-binding proteins (TagH) and two transmembrane proteins (TagG).</text>
</comment>
<comment type="subcellular location">
    <subcellularLocation>
        <location evidence="1">Cell membrane</location>
        <topology evidence="1">Peripheral membrane protein</topology>
    </subcellularLocation>
</comment>
<comment type="similarity">
    <text evidence="1">Belongs to the ABC transporter superfamily. Teichoic acids exporter (TC 3.A.1.104.1) family.</text>
</comment>
<name>TAGH_ENTFA</name>
<reference key="1">
    <citation type="journal article" date="2003" name="Science">
        <title>Role of mobile DNA in the evolution of vancomycin-resistant Enterococcus faecalis.</title>
        <authorList>
            <person name="Paulsen I.T."/>
            <person name="Banerjei L."/>
            <person name="Myers G.S.A."/>
            <person name="Nelson K.E."/>
            <person name="Seshadri R."/>
            <person name="Read T.D."/>
            <person name="Fouts D.E."/>
            <person name="Eisen J.A."/>
            <person name="Gill S.R."/>
            <person name="Heidelberg J.F."/>
            <person name="Tettelin H."/>
            <person name="Dodson R.J."/>
            <person name="Umayam L.A."/>
            <person name="Brinkac L.M."/>
            <person name="Beanan M.J."/>
            <person name="Daugherty S.C."/>
            <person name="DeBoy R.T."/>
            <person name="Durkin S.A."/>
            <person name="Kolonay J.F."/>
            <person name="Madupu R."/>
            <person name="Nelson W.C."/>
            <person name="Vamathevan J.J."/>
            <person name="Tran B."/>
            <person name="Upton J."/>
            <person name="Hansen T."/>
            <person name="Shetty J."/>
            <person name="Khouri H.M."/>
            <person name="Utterback T.R."/>
            <person name="Radune D."/>
            <person name="Ketchum K.A."/>
            <person name="Dougherty B.A."/>
            <person name="Fraser C.M."/>
        </authorList>
    </citation>
    <scope>NUCLEOTIDE SEQUENCE [LARGE SCALE GENOMIC DNA]</scope>
    <source>
        <strain>ATCC 700802 / V583</strain>
    </source>
</reference>